<accession>Q5E9X7</accession>
<accession>Q3B7L4</accession>
<organism>
    <name type="scientific">Bos taurus</name>
    <name type="common">Bovine</name>
    <dbReference type="NCBI Taxonomy" id="9913"/>
    <lineage>
        <taxon>Eukaryota</taxon>
        <taxon>Metazoa</taxon>
        <taxon>Chordata</taxon>
        <taxon>Craniata</taxon>
        <taxon>Vertebrata</taxon>
        <taxon>Euteleostomi</taxon>
        <taxon>Mammalia</taxon>
        <taxon>Eutheria</taxon>
        <taxon>Laurasiatheria</taxon>
        <taxon>Artiodactyla</taxon>
        <taxon>Ruminantia</taxon>
        <taxon>Pecora</taxon>
        <taxon>Bovidae</taxon>
        <taxon>Bovinae</taxon>
        <taxon>Bos</taxon>
    </lineage>
</organism>
<feature type="signal peptide" evidence="2">
    <location>
        <begin position="1"/>
        <end position="23"/>
    </location>
</feature>
<feature type="chain" id="PRO_0000299357" description="Inactive serine protease 35">
    <location>
        <begin position="24"/>
        <end position="412"/>
    </location>
</feature>
<feature type="domain" description="Peptidase S1">
    <location>
        <begin position="124"/>
        <end position="407"/>
    </location>
</feature>
<feature type="region of interest" description="Disordered" evidence="3">
    <location>
        <begin position="192"/>
        <end position="246"/>
    </location>
</feature>
<feature type="compositionally biased region" description="Basic residues" evidence="3">
    <location>
        <begin position="192"/>
        <end position="207"/>
    </location>
</feature>
<feature type="compositionally biased region" description="Basic and acidic residues" evidence="3">
    <location>
        <begin position="217"/>
        <end position="227"/>
    </location>
</feature>
<feature type="compositionally biased region" description="Basic residues" evidence="3">
    <location>
        <begin position="228"/>
        <end position="239"/>
    </location>
</feature>
<feature type="glycosylation site" description="N-linked (GlcNAc...) asparagine" evidence="2">
    <location>
        <position position="110"/>
    </location>
</feature>
<feature type="disulfide bond" evidence="1">
    <location>
        <begin position="154"/>
        <end position="170"/>
    </location>
</feature>
<feature type="sequence conflict" description="In Ref. 1; AAX08810." evidence="4" ref="1">
    <original>N</original>
    <variation>T</variation>
    <location>
        <position position="162"/>
    </location>
</feature>
<feature type="sequence conflict" description="In Ref. 1; AAX08810." evidence="4" ref="1">
    <original>R</original>
    <variation>G</variation>
    <location>
        <position position="268"/>
    </location>
</feature>
<reference key="1">
    <citation type="journal article" date="2005" name="BMC Genomics">
        <title>Characterization of 954 bovine full-CDS cDNA sequences.</title>
        <authorList>
            <person name="Harhay G.P."/>
            <person name="Sonstegard T.S."/>
            <person name="Keele J.W."/>
            <person name="Heaton M.P."/>
            <person name="Clawson M.L."/>
            <person name="Snelling W.M."/>
            <person name="Wiedmann R.T."/>
            <person name="Van Tassell C.P."/>
            <person name="Smith T.P.L."/>
        </authorList>
    </citation>
    <scope>NUCLEOTIDE SEQUENCE [LARGE SCALE MRNA]</scope>
</reference>
<reference key="2">
    <citation type="submission" date="2005-10" db="EMBL/GenBank/DDBJ databases">
        <authorList>
            <consortium name="NIH - Mammalian Gene Collection (MGC) project"/>
        </authorList>
    </citation>
    <scope>NUCLEOTIDE SEQUENCE [LARGE SCALE MRNA]</scope>
    <source>
        <strain>Hereford</strain>
        <tissue>Ascending colon</tissue>
    </source>
</reference>
<gene>
    <name type="primary">PRSS35</name>
</gene>
<comment type="subcellular location">
    <subcellularLocation>
        <location evidence="4">Secreted</location>
    </subcellularLocation>
</comment>
<comment type="similarity">
    <text evidence="4">Belongs to the peptidase S1 family.</text>
</comment>
<comment type="caution">
    <text evidence="4">Although related to peptidase S1 family, lacks the conserved active Ser residue in position 345 which is replaced by a Thr, suggesting that it has no protease activity.</text>
</comment>
<keyword id="KW-1015">Disulfide bond</keyword>
<keyword id="KW-0325">Glycoprotein</keyword>
<keyword id="KW-1185">Reference proteome</keyword>
<keyword id="KW-0964">Secreted</keyword>
<keyword id="KW-0721">Serine protease homolog</keyword>
<keyword id="KW-0732">Signal</keyword>
<name>PRS35_BOVIN</name>
<proteinExistence type="evidence at transcript level"/>
<dbReference type="EMBL" id="BT020793">
    <property type="protein sequence ID" value="AAX08810.1"/>
    <property type="molecule type" value="mRNA"/>
</dbReference>
<dbReference type="EMBL" id="BC107557">
    <property type="protein sequence ID" value="AAI07558.1"/>
    <property type="molecule type" value="mRNA"/>
</dbReference>
<dbReference type="RefSeq" id="NP_001030534.3">
    <property type="nucleotide sequence ID" value="NM_001035457.3"/>
</dbReference>
<dbReference type="RefSeq" id="XP_005210754.1">
    <property type="nucleotide sequence ID" value="XM_005210697.5"/>
</dbReference>
<dbReference type="RefSeq" id="XP_024852599.1">
    <property type="nucleotide sequence ID" value="XM_024996831.2"/>
</dbReference>
<dbReference type="RefSeq" id="XP_059745822.1">
    <property type="nucleotide sequence ID" value="XM_059889839.1"/>
</dbReference>
<dbReference type="FunCoup" id="Q5E9X7">
    <property type="interactions" value="325"/>
</dbReference>
<dbReference type="STRING" id="9913.ENSBTAP00000069102"/>
<dbReference type="MEROPS" id="S01.994"/>
<dbReference type="GlyCosmos" id="Q5E9X7">
    <property type="glycosylation" value="1 site, No reported glycans"/>
</dbReference>
<dbReference type="GlyGen" id="Q5E9X7">
    <property type="glycosylation" value="1 site"/>
</dbReference>
<dbReference type="PaxDb" id="9913-ENSBTAP00000037916"/>
<dbReference type="Ensembl" id="ENSBTAT00000068329.2">
    <property type="protein sequence ID" value="ENSBTAP00000069102.1"/>
    <property type="gene ID" value="ENSBTAG00000052055.2"/>
</dbReference>
<dbReference type="Ensembl" id="ENSBTAT00000096169.1">
    <property type="protein sequence ID" value="ENSBTAP00000090419.1"/>
    <property type="gene ID" value="ENSBTAG00000052055.2"/>
</dbReference>
<dbReference type="Ensembl" id="ENSBTAT00000101066.1">
    <property type="protein sequence ID" value="ENSBTAP00000076215.1"/>
    <property type="gene ID" value="ENSBTAG00000052055.2"/>
</dbReference>
<dbReference type="Ensembl" id="ENSBTAT00000106888.1">
    <property type="protein sequence ID" value="ENSBTAP00000076104.1"/>
    <property type="gene ID" value="ENSBTAG00000052055.2"/>
</dbReference>
<dbReference type="Ensembl" id="ENSBTAT00000107907.1">
    <property type="protein sequence ID" value="ENSBTAP00000090348.1"/>
    <property type="gene ID" value="ENSBTAG00000052055.2"/>
</dbReference>
<dbReference type="Ensembl" id="ENSBTAT00000108483.1">
    <property type="protein sequence ID" value="ENSBTAP00000091889.1"/>
    <property type="gene ID" value="ENSBTAG00000052055.2"/>
</dbReference>
<dbReference type="Ensembl" id="ENSBTAT00000124105.1">
    <property type="protein sequence ID" value="ENSBTAP00000101261.1"/>
    <property type="gene ID" value="ENSBTAG00000052055.2"/>
</dbReference>
<dbReference type="Ensembl" id="ENSBTAT00000126349.1">
    <property type="protein sequence ID" value="ENSBTAP00000083694.1"/>
    <property type="gene ID" value="ENSBTAG00000052055.2"/>
</dbReference>
<dbReference type="Ensembl" id="ENSBTAT00000135189.1">
    <property type="protein sequence ID" value="ENSBTAP00000100073.1"/>
    <property type="gene ID" value="ENSBTAG00000052055.2"/>
</dbReference>
<dbReference type="Ensembl" id="ENSBTAT00000135367.1">
    <property type="protein sequence ID" value="ENSBTAP00000092552.1"/>
    <property type="gene ID" value="ENSBTAG00000052055.2"/>
</dbReference>
<dbReference type="GeneID" id="614940"/>
<dbReference type="KEGG" id="bta:614940"/>
<dbReference type="CTD" id="167681"/>
<dbReference type="VEuPathDB" id="HostDB:ENSBTAG00000052055"/>
<dbReference type="VGNC" id="VGNC:33418">
    <property type="gene designation" value="PRSS35"/>
</dbReference>
<dbReference type="eggNOG" id="ENOG502QV0K">
    <property type="taxonomic scope" value="Eukaryota"/>
</dbReference>
<dbReference type="GeneTree" id="ENSGT00390000000155"/>
<dbReference type="HOGENOM" id="CLU_055829_0_0_1"/>
<dbReference type="InParanoid" id="Q5E9X7"/>
<dbReference type="OMA" id="MEQDFMW"/>
<dbReference type="OrthoDB" id="10037376at2759"/>
<dbReference type="TreeFam" id="TF329011"/>
<dbReference type="Proteomes" id="UP000009136">
    <property type="component" value="Chromosome 9"/>
</dbReference>
<dbReference type="Bgee" id="ENSBTAG00000052055">
    <property type="expression patterns" value="Expressed in myometrium and 74 other cell types or tissues"/>
</dbReference>
<dbReference type="GO" id="GO:0005576">
    <property type="term" value="C:extracellular region"/>
    <property type="evidence" value="ECO:0007669"/>
    <property type="project" value="UniProtKB-SubCell"/>
</dbReference>
<dbReference type="Gene3D" id="2.40.10.10">
    <property type="entry name" value="Trypsin-like serine proteases"/>
    <property type="match status" value="1"/>
</dbReference>
<dbReference type="InterPro" id="IPR050966">
    <property type="entry name" value="Glutamyl_endopeptidase"/>
</dbReference>
<dbReference type="InterPro" id="IPR009003">
    <property type="entry name" value="Peptidase_S1_PA"/>
</dbReference>
<dbReference type="InterPro" id="IPR043504">
    <property type="entry name" value="Peptidase_S1_PA_chymotrypsin"/>
</dbReference>
<dbReference type="InterPro" id="IPR001254">
    <property type="entry name" value="Trypsin_dom"/>
</dbReference>
<dbReference type="InterPro" id="IPR018114">
    <property type="entry name" value="TRYPSIN_HIS"/>
</dbReference>
<dbReference type="PANTHER" id="PTHR15462:SF17">
    <property type="entry name" value="INACTIVE SERINE PROTEASE 35"/>
    <property type="match status" value="1"/>
</dbReference>
<dbReference type="PANTHER" id="PTHR15462">
    <property type="entry name" value="SERINE PROTEASE"/>
    <property type="match status" value="1"/>
</dbReference>
<dbReference type="Pfam" id="PF00089">
    <property type="entry name" value="Trypsin"/>
    <property type="match status" value="1"/>
</dbReference>
<dbReference type="SUPFAM" id="SSF50494">
    <property type="entry name" value="Trypsin-like serine proteases"/>
    <property type="match status" value="1"/>
</dbReference>
<dbReference type="PROSITE" id="PS00134">
    <property type="entry name" value="TRYPSIN_HIS"/>
    <property type="match status" value="1"/>
</dbReference>
<evidence type="ECO:0000250" key="1"/>
<evidence type="ECO:0000255" key="2"/>
<evidence type="ECO:0000256" key="3">
    <source>
        <dbReference type="SAM" id="MobiDB-lite"/>
    </source>
</evidence>
<evidence type="ECO:0000305" key="4"/>
<sequence>MGAMFFGLMLFTLGWTLIDGSESEQDFMWHVRKIPRLVSERTFHLTSPAFEADAKMVLNRVCGIECQKDLPAPSLSDLEDSLSYETVFENGSRTLTRVKVQGWVPEPTQNLTSQGAPVRRKRQVYGTDSRFSILDKKFLTNFPFNTAVKLSTGCSGILISPNHVLTAAHCVHDGNGYIKGSKKLRVGLLKMRNKGGGKRRRGSRRNRREVSGAGREGSQDSLKETAKAGRRRKGSARRQRAADGRPSFQWTRVKNTHIPKGWARGESRDPALDYDYALLELKRPHKKKYMELGVSPTIKKLPGGMIHFSGFDQDRADQLVYRFCSVSDESNDLLYQYCDAESGSTGSGVYLRLKEPDKKRWKRKIIAIYSGHQWVDVHGVQKDYNVAVRITPLKYAQICLWMHGDDANCTQG</sequence>
<protein>
    <recommendedName>
        <fullName>Inactive serine protease 35</fullName>
    </recommendedName>
</protein>